<name>TAUB_SHIF8</name>
<organism>
    <name type="scientific">Shigella flexneri serotype 5b (strain 8401)</name>
    <dbReference type="NCBI Taxonomy" id="373384"/>
    <lineage>
        <taxon>Bacteria</taxon>
        <taxon>Pseudomonadati</taxon>
        <taxon>Pseudomonadota</taxon>
        <taxon>Gammaproteobacteria</taxon>
        <taxon>Enterobacterales</taxon>
        <taxon>Enterobacteriaceae</taxon>
        <taxon>Shigella</taxon>
    </lineage>
</organism>
<reference key="1">
    <citation type="journal article" date="2006" name="BMC Genomics">
        <title>Complete genome sequence of Shigella flexneri 5b and comparison with Shigella flexneri 2a.</title>
        <authorList>
            <person name="Nie H."/>
            <person name="Yang F."/>
            <person name="Zhang X."/>
            <person name="Yang J."/>
            <person name="Chen L."/>
            <person name="Wang J."/>
            <person name="Xiong Z."/>
            <person name="Peng J."/>
            <person name="Sun L."/>
            <person name="Dong J."/>
            <person name="Xue Y."/>
            <person name="Xu X."/>
            <person name="Chen S."/>
            <person name="Yao Z."/>
            <person name="Shen Y."/>
            <person name="Jin Q."/>
        </authorList>
    </citation>
    <scope>NUCLEOTIDE SEQUENCE [LARGE SCALE GENOMIC DNA]</scope>
    <source>
        <strain>8401</strain>
    </source>
</reference>
<proteinExistence type="inferred from homology"/>
<accession>Q0T7M2</accession>
<keyword id="KW-0067">ATP-binding</keyword>
<keyword id="KW-0997">Cell inner membrane</keyword>
<keyword id="KW-1003">Cell membrane</keyword>
<keyword id="KW-0472">Membrane</keyword>
<keyword id="KW-0547">Nucleotide-binding</keyword>
<keyword id="KW-1278">Translocase</keyword>
<keyword id="KW-0813">Transport</keyword>
<gene>
    <name evidence="1" type="primary">tauB</name>
    <name type="ordered locus">SFV_0330</name>
</gene>
<sequence>MLQISHLYADYGGKPALEDINLTLESGELLVVLGPSGCGKTTLLNLIAGFVPYQHGSIQLAGKRIEGPGAERGVVFQNEGLLPWRNVQDNVAFGLQLAGIEKMQRLEIAHQMLKKVGLEGAEKRYIWQLSDGQRQRVGIARALAANPQLLLLDEPFGAQDAFTRDQMQTLLLKLWQETGKQVLLITHDIEEAVFMATELVLLSSGPGRVLERLRLNFARRFVAGESSRSIKSDPQFIAMREYVLSRVFEQREAFS</sequence>
<comment type="function">
    <text evidence="1">Part of the ABC transporter complex TauABC involved in taurine import. Responsible for energy coupling to the transport system.</text>
</comment>
<comment type="catalytic activity">
    <reaction evidence="1">
        <text>taurine(out) + ATP + H2O = taurine(in) + ADP + phosphate + H(+)</text>
        <dbReference type="Rhea" id="RHEA:14613"/>
        <dbReference type="ChEBI" id="CHEBI:15377"/>
        <dbReference type="ChEBI" id="CHEBI:15378"/>
        <dbReference type="ChEBI" id="CHEBI:30616"/>
        <dbReference type="ChEBI" id="CHEBI:43474"/>
        <dbReference type="ChEBI" id="CHEBI:456216"/>
        <dbReference type="ChEBI" id="CHEBI:507393"/>
        <dbReference type="EC" id="7.6.2.7"/>
    </reaction>
</comment>
<comment type="subunit">
    <text evidence="1">The complex is composed of two ATP-binding proteins (TauB), two transmembrane proteins (TauC) and a solute-binding protein (TauA).</text>
</comment>
<comment type="subcellular location">
    <subcellularLocation>
        <location evidence="1">Cell inner membrane</location>
        <topology evidence="1">Peripheral membrane protein</topology>
    </subcellularLocation>
</comment>
<comment type="similarity">
    <text evidence="1">Belongs to the ABC transporter superfamily. Taurine importer (TC 3.A.1.17.1) family.</text>
</comment>
<evidence type="ECO:0000255" key="1">
    <source>
        <dbReference type="HAMAP-Rule" id="MF_01714"/>
    </source>
</evidence>
<dbReference type="EC" id="7.6.2.7" evidence="1"/>
<dbReference type="EMBL" id="CP000266">
    <property type="protein sequence ID" value="ABF02604.1"/>
    <property type="molecule type" value="Genomic_DNA"/>
</dbReference>
<dbReference type="RefSeq" id="WP_000939369.1">
    <property type="nucleotide sequence ID" value="NC_008258.1"/>
</dbReference>
<dbReference type="SMR" id="Q0T7M2"/>
<dbReference type="KEGG" id="sfv:SFV_0330"/>
<dbReference type="HOGENOM" id="CLU_000604_1_22_6"/>
<dbReference type="Proteomes" id="UP000000659">
    <property type="component" value="Chromosome"/>
</dbReference>
<dbReference type="GO" id="GO:0005886">
    <property type="term" value="C:plasma membrane"/>
    <property type="evidence" value="ECO:0007669"/>
    <property type="project" value="UniProtKB-SubCell"/>
</dbReference>
<dbReference type="GO" id="GO:0015411">
    <property type="term" value="F:ABC-type taurine transporter transporter activity"/>
    <property type="evidence" value="ECO:0007669"/>
    <property type="project" value="UniProtKB-EC"/>
</dbReference>
<dbReference type="GO" id="GO:0005524">
    <property type="term" value="F:ATP binding"/>
    <property type="evidence" value="ECO:0007669"/>
    <property type="project" value="UniProtKB-KW"/>
</dbReference>
<dbReference type="GO" id="GO:0016887">
    <property type="term" value="F:ATP hydrolysis activity"/>
    <property type="evidence" value="ECO:0007669"/>
    <property type="project" value="InterPro"/>
</dbReference>
<dbReference type="CDD" id="cd03293">
    <property type="entry name" value="ABC_NrtD_SsuB_transporters"/>
    <property type="match status" value="1"/>
</dbReference>
<dbReference type="FunFam" id="3.40.50.300:FF:000653">
    <property type="entry name" value="Aliphatic sulfonates import ATP-binding protein SsuB"/>
    <property type="match status" value="1"/>
</dbReference>
<dbReference type="Gene3D" id="3.40.50.300">
    <property type="entry name" value="P-loop containing nucleotide triphosphate hydrolases"/>
    <property type="match status" value="1"/>
</dbReference>
<dbReference type="InterPro" id="IPR003593">
    <property type="entry name" value="AAA+_ATPase"/>
</dbReference>
<dbReference type="InterPro" id="IPR003439">
    <property type="entry name" value="ABC_transporter-like_ATP-bd"/>
</dbReference>
<dbReference type="InterPro" id="IPR050166">
    <property type="entry name" value="ABC_transporter_ATP-bind"/>
</dbReference>
<dbReference type="InterPro" id="IPR027417">
    <property type="entry name" value="P-loop_NTPase"/>
</dbReference>
<dbReference type="NCBIfam" id="NF008421">
    <property type="entry name" value="PRK11248.1"/>
    <property type="match status" value="1"/>
</dbReference>
<dbReference type="PANTHER" id="PTHR42788:SF18">
    <property type="entry name" value="TAURINE IMPORT ATP-BINDING PROTEIN TAUB"/>
    <property type="match status" value="1"/>
</dbReference>
<dbReference type="PANTHER" id="PTHR42788">
    <property type="entry name" value="TAURINE IMPORT ATP-BINDING PROTEIN-RELATED"/>
    <property type="match status" value="1"/>
</dbReference>
<dbReference type="Pfam" id="PF00005">
    <property type="entry name" value="ABC_tran"/>
    <property type="match status" value="1"/>
</dbReference>
<dbReference type="SMART" id="SM00382">
    <property type="entry name" value="AAA"/>
    <property type="match status" value="1"/>
</dbReference>
<dbReference type="SUPFAM" id="SSF52540">
    <property type="entry name" value="P-loop containing nucleoside triphosphate hydrolases"/>
    <property type="match status" value="1"/>
</dbReference>
<dbReference type="PROSITE" id="PS50893">
    <property type="entry name" value="ABC_TRANSPORTER_2"/>
    <property type="match status" value="1"/>
</dbReference>
<dbReference type="PROSITE" id="PS51250">
    <property type="entry name" value="TAUB"/>
    <property type="match status" value="1"/>
</dbReference>
<feature type="chain" id="PRO_0000275845" description="Taurine import ATP-binding protein TauB">
    <location>
        <begin position="1"/>
        <end position="255"/>
    </location>
</feature>
<feature type="domain" description="ABC transporter" evidence="1">
    <location>
        <begin position="2"/>
        <end position="229"/>
    </location>
</feature>
<feature type="binding site" evidence="1">
    <location>
        <begin position="34"/>
        <end position="41"/>
    </location>
    <ligand>
        <name>ATP</name>
        <dbReference type="ChEBI" id="CHEBI:30616"/>
    </ligand>
</feature>
<protein>
    <recommendedName>
        <fullName evidence="1">Taurine import ATP-binding protein TauB</fullName>
        <ecNumber evidence="1">7.6.2.7</ecNumber>
    </recommendedName>
</protein>